<proteinExistence type="inferred from homology"/>
<sequence>MIQTESRLEVADNTGAREVMCIKVLGGSKRRYAGIGDIIKVTVKEATPRGRVKKGEIYNAVVVRTAKGVRRQDGSLIKFDGNAAVLLNNKLEPIGTRIFGPVTRELRSERFMKIVSLAPEVL</sequence>
<evidence type="ECO:0000255" key="1">
    <source>
        <dbReference type="HAMAP-Rule" id="MF_01367"/>
    </source>
</evidence>
<evidence type="ECO:0000305" key="2"/>
<protein>
    <recommendedName>
        <fullName evidence="1">Large ribosomal subunit protein uL14</fullName>
    </recommendedName>
    <alternativeName>
        <fullName evidence="2">50S ribosomal protein L14</fullName>
    </alternativeName>
</protein>
<reference key="1">
    <citation type="submission" date="2006-08" db="EMBL/GenBank/DDBJ databases">
        <title>Complete sequence of chromosome 1 of Burkholderia cepacia AMMD.</title>
        <authorList>
            <person name="Copeland A."/>
            <person name="Lucas S."/>
            <person name="Lapidus A."/>
            <person name="Barry K."/>
            <person name="Detter J.C."/>
            <person name="Glavina del Rio T."/>
            <person name="Hammon N."/>
            <person name="Israni S."/>
            <person name="Pitluck S."/>
            <person name="Bruce D."/>
            <person name="Chain P."/>
            <person name="Malfatti S."/>
            <person name="Shin M."/>
            <person name="Vergez L."/>
            <person name="Schmutz J."/>
            <person name="Larimer F."/>
            <person name="Land M."/>
            <person name="Hauser L."/>
            <person name="Kyrpides N."/>
            <person name="Kim E."/>
            <person name="Parke J."/>
            <person name="Coenye T."/>
            <person name="Konstantinidis K."/>
            <person name="Ramette A."/>
            <person name="Tiedje J."/>
            <person name="Richardson P."/>
        </authorList>
    </citation>
    <scope>NUCLEOTIDE SEQUENCE [LARGE SCALE GENOMIC DNA]</scope>
    <source>
        <strain>ATCC BAA-244 / DSM 16087 / CCUG 44356 / LMG 19182 / AMMD</strain>
    </source>
</reference>
<dbReference type="EMBL" id="CP000440">
    <property type="protein sequence ID" value="ABI85837.1"/>
    <property type="molecule type" value="Genomic_DNA"/>
</dbReference>
<dbReference type="RefSeq" id="WP_006752929.1">
    <property type="nucleotide sequence ID" value="NZ_CP009798.1"/>
</dbReference>
<dbReference type="SMR" id="Q0BJ36"/>
<dbReference type="GeneID" id="98107150"/>
<dbReference type="KEGG" id="bam:Bamb_0277"/>
<dbReference type="PATRIC" id="fig|339670.21.peg.1343"/>
<dbReference type="eggNOG" id="COG0093">
    <property type="taxonomic scope" value="Bacteria"/>
</dbReference>
<dbReference type="Proteomes" id="UP000000662">
    <property type="component" value="Chromosome 1"/>
</dbReference>
<dbReference type="GO" id="GO:0022625">
    <property type="term" value="C:cytosolic large ribosomal subunit"/>
    <property type="evidence" value="ECO:0007669"/>
    <property type="project" value="TreeGrafter"/>
</dbReference>
<dbReference type="GO" id="GO:0070180">
    <property type="term" value="F:large ribosomal subunit rRNA binding"/>
    <property type="evidence" value="ECO:0007669"/>
    <property type="project" value="TreeGrafter"/>
</dbReference>
<dbReference type="GO" id="GO:0003735">
    <property type="term" value="F:structural constituent of ribosome"/>
    <property type="evidence" value="ECO:0007669"/>
    <property type="project" value="InterPro"/>
</dbReference>
<dbReference type="GO" id="GO:0006412">
    <property type="term" value="P:translation"/>
    <property type="evidence" value="ECO:0007669"/>
    <property type="project" value="UniProtKB-UniRule"/>
</dbReference>
<dbReference type="CDD" id="cd00337">
    <property type="entry name" value="Ribosomal_uL14"/>
    <property type="match status" value="1"/>
</dbReference>
<dbReference type="FunFam" id="2.40.150.20:FF:000001">
    <property type="entry name" value="50S ribosomal protein L14"/>
    <property type="match status" value="1"/>
</dbReference>
<dbReference type="Gene3D" id="2.40.150.20">
    <property type="entry name" value="Ribosomal protein L14"/>
    <property type="match status" value="1"/>
</dbReference>
<dbReference type="HAMAP" id="MF_01367">
    <property type="entry name" value="Ribosomal_uL14"/>
    <property type="match status" value="1"/>
</dbReference>
<dbReference type="InterPro" id="IPR000218">
    <property type="entry name" value="Ribosomal_uL14"/>
</dbReference>
<dbReference type="InterPro" id="IPR005745">
    <property type="entry name" value="Ribosomal_uL14_bac-type"/>
</dbReference>
<dbReference type="InterPro" id="IPR019972">
    <property type="entry name" value="Ribosomal_uL14_CS"/>
</dbReference>
<dbReference type="InterPro" id="IPR036853">
    <property type="entry name" value="Ribosomal_uL14_sf"/>
</dbReference>
<dbReference type="NCBIfam" id="TIGR01067">
    <property type="entry name" value="rplN_bact"/>
    <property type="match status" value="1"/>
</dbReference>
<dbReference type="PANTHER" id="PTHR11761">
    <property type="entry name" value="50S/60S RIBOSOMAL PROTEIN L14/L23"/>
    <property type="match status" value="1"/>
</dbReference>
<dbReference type="PANTHER" id="PTHR11761:SF3">
    <property type="entry name" value="LARGE RIBOSOMAL SUBUNIT PROTEIN UL14M"/>
    <property type="match status" value="1"/>
</dbReference>
<dbReference type="Pfam" id="PF00238">
    <property type="entry name" value="Ribosomal_L14"/>
    <property type="match status" value="1"/>
</dbReference>
<dbReference type="SMART" id="SM01374">
    <property type="entry name" value="Ribosomal_L14"/>
    <property type="match status" value="1"/>
</dbReference>
<dbReference type="SUPFAM" id="SSF50193">
    <property type="entry name" value="Ribosomal protein L14"/>
    <property type="match status" value="1"/>
</dbReference>
<dbReference type="PROSITE" id="PS00049">
    <property type="entry name" value="RIBOSOMAL_L14"/>
    <property type="match status" value="1"/>
</dbReference>
<name>RL14_BURCM</name>
<organism>
    <name type="scientific">Burkholderia ambifaria (strain ATCC BAA-244 / DSM 16087 / CCUG 44356 / LMG 19182 / AMMD)</name>
    <name type="common">Burkholderia cepacia (strain AMMD)</name>
    <dbReference type="NCBI Taxonomy" id="339670"/>
    <lineage>
        <taxon>Bacteria</taxon>
        <taxon>Pseudomonadati</taxon>
        <taxon>Pseudomonadota</taxon>
        <taxon>Betaproteobacteria</taxon>
        <taxon>Burkholderiales</taxon>
        <taxon>Burkholderiaceae</taxon>
        <taxon>Burkholderia</taxon>
        <taxon>Burkholderia cepacia complex</taxon>
    </lineage>
</organism>
<gene>
    <name evidence="1" type="primary">rplN</name>
    <name type="ordered locus">Bamb_0277</name>
</gene>
<feature type="chain" id="PRO_1000055532" description="Large ribosomal subunit protein uL14">
    <location>
        <begin position="1"/>
        <end position="122"/>
    </location>
</feature>
<keyword id="KW-0687">Ribonucleoprotein</keyword>
<keyword id="KW-0689">Ribosomal protein</keyword>
<keyword id="KW-0694">RNA-binding</keyword>
<keyword id="KW-0699">rRNA-binding</keyword>
<accession>Q0BJ36</accession>
<comment type="function">
    <text evidence="1">Binds to 23S rRNA. Forms part of two intersubunit bridges in the 70S ribosome.</text>
</comment>
<comment type="subunit">
    <text evidence="1">Part of the 50S ribosomal subunit. Forms a cluster with proteins L3 and L19. In the 70S ribosome, L14 and L19 interact and together make contacts with the 16S rRNA in bridges B5 and B8.</text>
</comment>
<comment type="similarity">
    <text evidence="1">Belongs to the universal ribosomal protein uL14 family.</text>
</comment>